<evidence type="ECO:0000250" key="1"/>
<evidence type="ECO:0000250" key="2">
    <source>
        <dbReference type="UniProtKB" id="Q03818"/>
    </source>
</evidence>
<evidence type="ECO:0000255" key="3"/>
<evidence type="ECO:0000305" key="4"/>
<keyword id="KW-0072">Autophagy</keyword>
<keyword id="KW-0175">Coiled coil</keyword>
<keyword id="KW-0472">Membrane</keyword>
<keyword id="KW-0653">Protein transport</keyword>
<keyword id="KW-1185">Reference proteome</keyword>
<keyword id="KW-0813">Transport</keyword>
<name>ATG16_PICGU</name>
<dbReference type="EMBL" id="CH408157">
    <property type="protein sequence ID" value="EDK38914.1"/>
    <property type="molecule type" value="Genomic_DNA"/>
</dbReference>
<dbReference type="RefSeq" id="XP_001485283.1">
    <property type="nucleotide sequence ID" value="XM_001485233.1"/>
</dbReference>
<dbReference type="SMR" id="A5DIB1"/>
<dbReference type="FunCoup" id="A5DIB1">
    <property type="interactions" value="32"/>
</dbReference>
<dbReference type="STRING" id="294746.A5DIB1"/>
<dbReference type="GeneID" id="5127375"/>
<dbReference type="KEGG" id="pgu:PGUG_03012"/>
<dbReference type="VEuPathDB" id="FungiDB:PGUG_03012"/>
<dbReference type="eggNOG" id="ENOG502S5CU">
    <property type="taxonomic scope" value="Eukaryota"/>
</dbReference>
<dbReference type="HOGENOM" id="CLU_117720_0_0_1"/>
<dbReference type="InParanoid" id="A5DIB1"/>
<dbReference type="OMA" id="NHEIDAR"/>
<dbReference type="OrthoDB" id="8949486at2759"/>
<dbReference type="Proteomes" id="UP000001997">
    <property type="component" value="Unassembled WGS sequence"/>
</dbReference>
<dbReference type="GO" id="GO:0034045">
    <property type="term" value="C:phagophore assembly site membrane"/>
    <property type="evidence" value="ECO:0007669"/>
    <property type="project" value="UniProtKB-SubCell"/>
</dbReference>
<dbReference type="GO" id="GO:0006914">
    <property type="term" value="P:autophagy"/>
    <property type="evidence" value="ECO:0007669"/>
    <property type="project" value="UniProtKB-KW"/>
</dbReference>
<dbReference type="GO" id="GO:0015031">
    <property type="term" value="P:protein transport"/>
    <property type="evidence" value="ECO:0007669"/>
    <property type="project" value="UniProtKB-KW"/>
</dbReference>
<dbReference type="CDD" id="cd22887">
    <property type="entry name" value="Atg16_CCD"/>
    <property type="match status" value="1"/>
</dbReference>
<dbReference type="Gene3D" id="1.20.5.170">
    <property type="match status" value="1"/>
</dbReference>
<dbReference type="InterPro" id="IPR013923">
    <property type="entry name" value="Autophagy-rel_prot_16_dom"/>
</dbReference>
<dbReference type="Pfam" id="PF08614">
    <property type="entry name" value="ATG16"/>
    <property type="match status" value="1"/>
</dbReference>
<organism>
    <name type="scientific">Meyerozyma guilliermondii (strain ATCC 6260 / CBS 566 / DSM 6381 / JCM 1539 / NBRC 10279 / NRRL Y-324)</name>
    <name type="common">Yeast</name>
    <name type="synonym">Candida guilliermondii</name>
    <dbReference type="NCBI Taxonomy" id="294746"/>
    <lineage>
        <taxon>Eukaryota</taxon>
        <taxon>Fungi</taxon>
        <taxon>Dikarya</taxon>
        <taxon>Ascomycota</taxon>
        <taxon>Saccharomycotina</taxon>
        <taxon>Pichiomycetes</taxon>
        <taxon>Debaryomycetaceae</taxon>
        <taxon>Meyerozyma</taxon>
    </lineage>
</organism>
<comment type="function">
    <text evidence="1">Stabilizes the ATG5-ATG12 conjugate which is necessary for autophagy. The ATG5-ATG12/ATG16 complex is required for efficient promotion of ATG8-conjugation to phosphatidylethanolamine and ATG8 localization to the pre-autophagosomal structure (PAS). Also recruits ATG3 to the PAS. Involved in endoplasmic reticulum-specific autophagic process and is essential for the survival of cells subjected to severe ER stress (By similarity).</text>
</comment>
<comment type="subunit">
    <text evidence="1">Homodimer (By similarity). Part of the ATG5-ATG12/ATG16 complex. Several units of each may be present in this complex (By similarity).</text>
</comment>
<comment type="subcellular location">
    <subcellularLocation>
        <location evidence="2">Preautophagosomal structure membrane</location>
        <topology evidence="2">Peripheral membrane protein</topology>
    </subcellularLocation>
</comment>
<comment type="similarity">
    <text evidence="4">Belongs to the ATG16 family.</text>
</comment>
<accession>A5DIB1</accession>
<gene>
    <name type="primary">ATG16</name>
    <name type="ORF">PGUG_03012</name>
</gene>
<reference key="1">
    <citation type="journal article" date="2009" name="Nature">
        <title>Evolution of pathogenicity and sexual reproduction in eight Candida genomes.</title>
        <authorList>
            <person name="Butler G."/>
            <person name="Rasmussen M.D."/>
            <person name="Lin M.F."/>
            <person name="Santos M.A.S."/>
            <person name="Sakthikumar S."/>
            <person name="Munro C.A."/>
            <person name="Rheinbay E."/>
            <person name="Grabherr M."/>
            <person name="Forche A."/>
            <person name="Reedy J.L."/>
            <person name="Agrafioti I."/>
            <person name="Arnaud M.B."/>
            <person name="Bates S."/>
            <person name="Brown A.J.P."/>
            <person name="Brunke S."/>
            <person name="Costanzo M.C."/>
            <person name="Fitzpatrick D.A."/>
            <person name="de Groot P.W.J."/>
            <person name="Harris D."/>
            <person name="Hoyer L.L."/>
            <person name="Hube B."/>
            <person name="Klis F.M."/>
            <person name="Kodira C."/>
            <person name="Lennard N."/>
            <person name="Logue M.E."/>
            <person name="Martin R."/>
            <person name="Neiman A.M."/>
            <person name="Nikolaou E."/>
            <person name="Quail M.A."/>
            <person name="Quinn J."/>
            <person name="Santos M.C."/>
            <person name="Schmitzberger F.F."/>
            <person name="Sherlock G."/>
            <person name="Shah P."/>
            <person name="Silverstein K.A.T."/>
            <person name="Skrzypek M.S."/>
            <person name="Soll D."/>
            <person name="Staggs R."/>
            <person name="Stansfield I."/>
            <person name="Stumpf M.P.H."/>
            <person name="Sudbery P.E."/>
            <person name="Srikantha T."/>
            <person name="Zeng Q."/>
            <person name="Berman J."/>
            <person name="Berriman M."/>
            <person name="Heitman J."/>
            <person name="Gow N.A.R."/>
            <person name="Lorenz M.C."/>
            <person name="Birren B.W."/>
            <person name="Kellis M."/>
            <person name="Cuomo C.A."/>
        </authorList>
    </citation>
    <scope>NUCLEOTIDE SEQUENCE [LARGE SCALE GENOMIC DNA]</scope>
    <source>
        <strain>ATCC 6260 / CBS 566 / DSM 6381 / JCM 1539 / NBRC 10279 / NRRL Y-324</strain>
    </source>
</reference>
<protein>
    <recommendedName>
        <fullName>Autophagy-related protein 16</fullName>
    </recommendedName>
</protein>
<proteinExistence type="inferred from homology"/>
<sequence length="169" mass="19487">MTEDWGGDILARLKLRDDLESRDSKYFEAFDLLRRKKVIKGTSGDPDVAAENERLIEKLNNLAIEVEKKDSQISKLKRQLSVAEKTIKSHQNKLENLALEVQEKNKNIEIVNDEVLMNQIQTAVLQKKLGELTKENETLVKRWMDRVSSEAQQMNDANQFLESMRKTSG</sequence>
<feature type="chain" id="PRO_0000317976" description="Autophagy-related protein 16">
    <location>
        <begin position="1"/>
        <end position="169"/>
    </location>
</feature>
<feature type="coiled-coil region" evidence="3">
    <location>
        <begin position="47"/>
        <end position="164"/>
    </location>
</feature>